<dbReference type="EMBL" id="CP000409">
    <property type="protein sequence ID" value="ABV73157.1"/>
    <property type="molecule type" value="Genomic_DNA"/>
</dbReference>
<dbReference type="RefSeq" id="WP_012148358.1">
    <property type="nucleotide sequence ID" value="NC_009879.1"/>
</dbReference>
<dbReference type="SMR" id="A8EXS4"/>
<dbReference type="STRING" id="293613.A1E_01045"/>
<dbReference type="KEGG" id="rcm:A1E_01045"/>
<dbReference type="eggNOG" id="COG0484">
    <property type="taxonomic scope" value="Bacteria"/>
</dbReference>
<dbReference type="HOGENOM" id="CLU_068529_2_0_5"/>
<dbReference type="Proteomes" id="UP000007056">
    <property type="component" value="Chromosome"/>
</dbReference>
<dbReference type="GO" id="GO:0001671">
    <property type="term" value="F:ATPase activator activity"/>
    <property type="evidence" value="ECO:0007669"/>
    <property type="project" value="InterPro"/>
</dbReference>
<dbReference type="GO" id="GO:0051087">
    <property type="term" value="F:protein-folding chaperone binding"/>
    <property type="evidence" value="ECO:0007669"/>
    <property type="project" value="InterPro"/>
</dbReference>
<dbReference type="GO" id="GO:0044571">
    <property type="term" value="P:[2Fe-2S] cluster assembly"/>
    <property type="evidence" value="ECO:0007669"/>
    <property type="project" value="InterPro"/>
</dbReference>
<dbReference type="GO" id="GO:0051259">
    <property type="term" value="P:protein complex oligomerization"/>
    <property type="evidence" value="ECO:0007669"/>
    <property type="project" value="InterPro"/>
</dbReference>
<dbReference type="GO" id="GO:0006457">
    <property type="term" value="P:protein folding"/>
    <property type="evidence" value="ECO:0007669"/>
    <property type="project" value="UniProtKB-UniRule"/>
</dbReference>
<dbReference type="CDD" id="cd06257">
    <property type="entry name" value="DnaJ"/>
    <property type="match status" value="1"/>
</dbReference>
<dbReference type="Gene3D" id="1.10.287.110">
    <property type="entry name" value="DnaJ domain"/>
    <property type="match status" value="1"/>
</dbReference>
<dbReference type="Gene3D" id="1.20.1280.20">
    <property type="entry name" value="HscB, C-terminal domain"/>
    <property type="match status" value="1"/>
</dbReference>
<dbReference type="HAMAP" id="MF_00682">
    <property type="entry name" value="HscB"/>
    <property type="match status" value="1"/>
</dbReference>
<dbReference type="InterPro" id="IPR001623">
    <property type="entry name" value="DnaJ_domain"/>
</dbReference>
<dbReference type="InterPro" id="IPR004640">
    <property type="entry name" value="HscB"/>
</dbReference>
<dbReference type="InterPro" id="IPR036386">
    <property type="entry name" value="HscB_C_sf"/>
</dbReference>
<dbReference type="InterPro" id="IPR009073">
    <property type="entry name" value="HscB_oligo_C"/>
</dbReference>
<dbReference type="InterPro" id="IPR036869">
    <property type="entry name" value="J_dom_sf"/>
</dbReference>
<dbReference type="NCBIfam" id="TIGR00714">
    <property type="entry name" value="hscB"/>
    <property type="match status" value="1"/>
</dbReference>
<dbReference type="PANTHER" id="PTHR14021">
    <property type="entry name" value="IRON-SULFUR CLUSTER CO-CHAPERONE PROTEIN HSCB"/>
    <property type="match status" value="1"/>
</dbReference>
<dbReference type="PANTHER" id="PTHR14021:SF15">
    <property type="entry name" value="IRON-SULFUR CLUSTER CO-CHAPERONE PROTEIN HSCB"/>
    <property type="match status" value="1"/>
</dbReference>
<dbReference type="Pfam" id="PF00226">
    <property type="entry name" value="DnaJ"/>
    <property type="match status" value="1"/>
</dbReference>
<dbReference type="Pfam" id="PF07743">
    <property type="entry name" value="HSCB_C"/>
    <property type="match status" value="1"/>
</dbReference>
<dbReference type="SMART" id="SM00271">
    <property type="entry name" value="DnaJ"/>
    <property type="match status" value="1"/>
</dbReference>
<dbReference type="SUPFAM" id="SSF46565">
    <property type="entry name" value="Chaperone J-domain"/>
    <property type="match status" value="1"/>
</dbReference>
<dbReference type="SUPFAM" id="SSF47144">
    <property type="entry name" value="HSC20 (HSCB), C-terminal oligomerisation domain"/>
    <property type="match status" value="1"/>
</dbReference>
<dbReference type="PROSITE" id="PS50076">
    <property type="entry name" value="DNAJ_2"/>
    <property type="match status" value="1"/>
</dbReference>
<sequence>MQNYFQLLGLQQDYNIDLKILEKQYFAMQVKYHPDKAKTLQEKEQNLIIAAELNKAYSTLKDALKRAEYMLLLQNINLNDQKARTLLSSLELSIFWDEMEIIENTTICSDLEKIKAKYELMEKHEIDSLKQAFEEQNLSDATIKTSKLKYIGTLLNKLQKKIKSCK</sequence>
<gene>
    <name evidence="1" type="primary">hscB</name>
    <name type="ordered locus">A1E_01045</name>
</gene>
<comment type="function">
    <text evidence="1">Co-chaperone involved in the maturation of iron-sulfur cluster-containing proteins. Seems to help targeting proteins to be folded toward HscA.</text>
</comment>
<comment type="subunit">
    <text evidence="1">Interacts with HscA and stimulates its ATPase activity.</text>
</comment>
<comment type="similarity">
    <text evidence="1">Belongs to the HscB family.</text>
</comment>
<protein>
    <recommendedName>
        <fullName evidence="1">Co-chaperone protein HscB homolog</fullName>
    </recommendedName>
</protein>
<reference key="1">
    <citation type="submission" date="2007-09" db="EMBL/GenBank/DDBJ databases">
        <title>Complete genome sequence of Rickettsia canadensis.</title>
        <authorList>
            <person name="Madan A."/>
            <person name="Fahey J."/>
            <person name="Helton E."/>
            <person name="Ketteman M."/>
            <person name="Madan A."/>
            <person name="Rodrigues S."/>
            <person name="Sanchez A."/>
            <person name="Whiting M."/>
            <person name="Dasch G."/>
            <person name="Eremeeva M."/>
        </authorList>
    </citation>
    <scope>NUCLEOTIDE SEQUENCE [LARGE SCALE GENOMIC DNA]</scope>
    <source>
        <strain>McKiel</strain>
    </source>
</reference>
<accession>A8EXS4</accession>
<keyword id="KW-0143">Chaperone</keyword>
<feature type="chain" id="PRO_1000131747" description="Co-chaperone protein HscB homolog">
    <location>
        <begin position="1"/>
        <end position="166"/>
    </location>
</feature>
<feature type="domain" description="J" evidence="1">
    <location>
        <begin position="3"/>
        <end position="73"/>
    </location>
</feature>
<name>HSCB_RICCK</name>
<evidence type="ECO:0000255" key="1">
    <source>
        <dbReference type="HAMAP-Rule" id="MF_00682"/>
    </source>
</evidence>
<proteinExistence type="inferred from homology"/>
<organism>
    <name type="scientific">Rickettsia canadensis (strain McKiel)</name>
    <dbReference type="NCBI Taxonomy" id="293613"/>
    <lineage>
        <taxon>Bacteria</taxon>
        <taxon>Pseudomonadati</taxon>
        <taxon>Pseudomonadota</taxon>
        <taxon>Alphaproteobacteria</taxon>
        <taxon>Rickettsiales</taxon>
        <taxon>Rickettsiaceae</taxon>
        <taxon>Rickettsieae</taxon>
        <taxon>Rickettsia</taxon>
        <taxon>belli group</taxon>
    </lineage>
</organism>